<sequence length="504" mass="56664">MTADPDPPFVAVWNSVVAELNGDVNGDRQGDPSLPVLTPQQRAWLKLVKPLVIAEGFALLSVPTPFVQNEIERHLREPIVTALSRKLGQRVELGVRIATPTDEPEDAPDSFADSPAPASVPAGPADADEIDDDRDARVNAQESWPKYFSRPEPDTSSDDSNAVNLNRRYTFDTFVIGASNRFAHAATLAIAEAPARAYNPLFIWGESGLGKTHLLHAAGNYAQRLFPGMRVKYVSTEEFTNDFINSLRDDRKASFKRSYRDIDILLVDDIQFIEGKEGIQEEFFHTFNTLHNSNKQIVISSDRPPKQLATLEDRLRTRFEWGLITDVQPPELETRIAILRKKAQMDRLDVPDDVLELIASSIERNIRELEGALIRVTAFASLNKTRIDRSLAEVVLRDLIADATTMQISTAAIMAVTAEYFETTVEELRGPGKTRALAQSRQIAMYLCRELTDLSLPKIGQAFGRDHTTVMYAEKKIRGEMAERREVFDHVKELTTRIRQRAKR</sequence>
<name>DNAA_MYCSM</name>
<accession>P0C557</accession>
<accession>P49992</accession>
<accession>Q59558</accession>
<feature type="chain" id="PRO_0000114217" description="Chromosomal replication initiator protein DnaA">
    <location>
        <begin position="1"/>
        <end position="504"/>
    </location>
</feature>
<feature type="region of interest" description="Domain I, interacts with DnaA modulators" evidence="1">
    <location>
        <begin position="1"/>
        <end position="109"/>
    </location>
</feature>
<feature type="region of interest" description="Disordered" evidence="2">
    <location>
        <begin position="98"/>
        <end position="162"/>
    </location>
</feature>
<feature type="region of interest" description="Domain II" evidence="1">
    <location>
        <begin position="110"/>
        <end position="163"/>
    </location>
</feature>
<feature type="region of interest" description="Domain III, AAA+ region" evidence="1">
    <location>
        <begin position="164"/>
        <end position="380"/>
    </location>
</feature>
<feature type="region of interest" description="Domain IV, binds dsDNA" evidence="1">
    <location>
        <begin position="381"/>
        <end position="504"/>
    </location>
</feature>
<feature type="compositionally biased region" description="Low complexity" evidence="2">
    <location>
        <begin position="109"/>
        <end position="125"/>
    </location>
</feature>
<feature type="binding site" evidence="1">
    <location>
        <position position="208"/>
    </location>
    <ligand>
        <name>ATP</name>
        <dbReference type="ChEBI" id="CHEBI:30616"/>
    </ligand>
</feature>
<feature type="binding site" evidence="1">
    <location>
        <position position="210"/>
    </location>
    <ligand>
        <name>ATP</name>
        <dbReference type="ChEBI" id="CHEBI:30616"/>
    </ligand>
</feature>
<feature type="binding site" evidence="1">
    <location>
        <position position="211"/>
    </location>
    <ligand>
        <name>ATP</name>
        <dbReference type="ChEBI" id="CHEBI:30616"/>
    </ligand>
</feature>
<feature type="binding site" evidence="1">
    <location>
        <position position="212"/>
    </location>
    <ligand>
        <name>ATP</name>
        <dbReference type="ChEBI" id="CHEBI:30616"/>
    </ligand>
</feature>
<reference key="1">
    <citation type="journal article" date="1996" name="Mol. Microbiol.">
        <title>Organization of the origins of replication of the chromosomes of Mycobacterium smegmatis, Mycobacterium leprae and Mycobacterium tuberculosis and isolation of a functional origin from M. smegmatis.</title>
        <authorList>
            <person name="Salazar L."/>
            <person name="Fsihi H."/>
            <person name="De Rossi E."/>
            <person name="Riccardi G."/>
            <person name="Rios C."/>
            <person name="Cole S.T."/>
            <person name="Takiff H.E."/>
        </authorList>
    </citation>
    <scope>NUCLEOTIDE SEQUENCE [GENOMIC DNA]</scope>
    <source>
        <strain>ATCC 607 / DSM 43465 / JCM 20379 / NBRC 3207 / NRRL B-692</strain>
    </source>
</reference>
<comment type="function">
    <text evidence="1">Plays an essential role in the initiation and regulation of chromosomal replication. ATP-DnaA binds to the origin of replication (oriC) to initiate formation of the DNA replication initiation complex once per cell cycle. Binds the DnaA box (a 9 base pair repeat at the origin) and separates the double-stranded (ds)DNA. Forms a right-handed helical filament on oriC DNA; dsDNA binds to the exterior of the filament while single-stranded (ss)DNA is stabiized in the filament's interior. The ATP-DnaA-oriC complex binds and stabilizes one strand of the AT-rich DNA unwinding element (DUE), permitting loading of DNA polymerase. After initiation quickly degrades to an ADP-DnaA complex that is not apt for DNA replication. Binds acidic phospholipids.</text>
</comment>
<comment type="subunit">
    <text evidence="1">Oligomerizes as a right-handed, spiral filament on DNA at oriC.</text>
</comment>
<comment type="subcellular location">
    <subcellularLocation>
        <location evidence="1">Cytoplasm</location>
    </subcellularLocation>
</comment>
<comment type="domain">
    <text evidence="1">Domain I is involved in oligomerization and binding regulators, domain II is flexibile and of varying length in different bacteria, domain III forms the AAA+ region, while domain IV binds dsDNA.</text>
</comment>
<comment type="similarity">
    <text evidence="1">Belongs to the DnaA family.</text>
</comment>
<gene>
    <name evidence="1" type="primary">dnaA</name>
</gene>
<protein>
    <recommendedName>
        <fullName evidence="1">Chromosomal replication initiator protein DnaA</fullName>
    </recommendedName>
</protein>
<organism>
    <name type="scientific">Mycolicibacterium smegmatis</name>
    <name type="common">Mycobacterium smegmatis</name>
    <dbReference type="NCBI Taxonomy" id="1772"/>
    <lineage>
        <taxon>Bacteria</taxon>
        <taxon>Bacillati</taxon>
        <taxon>Actinomycetota</taxon>
        <taxon>Actinomycetes</taxon>
        <taxon>Mycobacteriales</taxon>
        <taxon>Mycobacteriaceae</taxon>
        <taxon>Mycolicibacterium</taxon>
    </lineage>
</organism>
<evidence type="ECO:0000255" key="1">
    <source>
        <dbReference type="HAMAP-Rule" id="MF_00377"/>
    </source>
</evidence>
<evidence type="ECO:0000256" key="2">
    <source>
        <dbReference type="SAM" id="MobiDB-lite"/>
    </source>
</evidence>
<dbReference type="EMBL" id="X92503">
    <property type="protein sequence ID" value="CAA63248.1"/>
    <property type="molecule type" value="Genomic_DNA"/>
</dbReference>
<dbReference type="PIR" id="S70986">
    <property type="entry name" value="S70986"/>
</dbReference>
<dbReference type="RefSeq" id="WP_003898364.1">
    <property type="nucleotide sequence ID" value="NZ_UGQO01000001.1"/>
</dbReference>
<dbReference type="SMR" id="P0C557"/>
<dbReference type="GeneID" id="93461515"/>
<dbReference type="KEGG" id="msh:LI98_34295"/>
<dbReference type="KEGG" id="msn:LI99_34290"/>
<dbReference type="OMA" id="DFIHFYQ"/>
<dbReference type="GO" id="GO:0005737">
    <property type="term" value="C:cytoplasm"/>
    <property type="evidence" value="ECO:0007669"/>
    <property type="project" value="UniProtKB-SubCell"/>
</dbReference>
<dbReference type="GO" id="GO:0005886">
    <property type="term" value="C:plasma membrane"/>
    <property type="evidence" value="ECO:0007669"/>
    <property type="project" value="TreeGrafter"/>
</dbReference>
<dbReference type="GO" id="GO:0005524">
    <property type="term" value="F:ATP binding"/>
    <property type="evidence" value="ECO:0007669"/>
    <property type="project" value="UniProtKB-UniRule"/>
</dbReference>
<dbReference type="GO" id="GO:0016887">
    <property type="term" value="F:ATP hydrolysis activity"/>
    <property type="evidence" value="ECO:0007669"/>
    <property type="project" value="InterPro"/>
</dbReference>
<dbReference type="GO" id="GO:0003688">
    <property type="term" value="F:DNA replication origin binding"/>
    <property type="evidence" value="ECO:0007669"/>
    <property type="project" value="UniProtKB-UniRule"/>
</dbReference>
<dbReference type="GO" id="GO:0008289">
    <property type="term" value="F:lipid binding"/>
    <property type="evidence" value="ECO:0007669"/>
    <property type="project" value="UniProtKB-KW"/>
</dbReference>
<dbReference type="GO" id="GO:0006270">
    <property type="term" value="P:DNA replication initiation"/>
    <property type="evidence" value="ECO:0007669"/>
    <property type="project" value="UniProtKB-UniRule"/>
</dbReference>
<dbReference type="GO" id="GO:0006275">
    <property type="term" value="P:regulation of DNA replication"/>
    <property type="evidence" value="ECO:0007669"/>
    <property type="project" value="UniProtKB-UniRule"/>
</dbReference>
<dbReference type="CDD" id="cd00009">
    <property type="entry name" value="AAA"/>
    <property type="match status" value="1"/>
</dbReference>
<dbReference type="CDD" id="cd06571">
    <property type="entry name" value="Bac_DnaA_C"/>
    <property type="match status" value="1"/>
</dbReference>
<dbReference type="FunFam" id="1.10.1750.10:FF:000002">
    <property type="entry name" value="Chromosomal replication initiator protein DnaA"/>
    <property type="match status" value="1"/>
</dbReference>
<dbReference type="FunFam" id="1.10.8.60:FF:000003">
    <property type="entry name" value="Chromosomal replication initiator protein DnaA"/>
    <property type="match status" value="1"/>
</dbReference>
<dbReference type="FunFam" id="3.40.50.300:FF:000150">
    <property type="entry name" value="Chromosomal replication initiator protein DnaA"/>
    <property type="match status" value="1"/>
</dbReference>
<dbReference type="Gene3D" id="1.10.1750.10">
    <property type="match status" value="1"/>
</dbReference>
<dbReference type="Gene3D" id="1.10.8.60">
    <property type="match status" value="1"/>
</dbReference>
<dbReference type="Gene3D" id="3.30.300.180">
    <property type="match status" value="1"/>
</dbReference>
<dbReference type="Gene3D" id="3.40.50.300">
    <property type="entry name" value="P-loop containing nucleotide triphosphate hydrolases"/>
    <property type="match status" value="1"/>
</dbReference>
<dbReference type="HAMAP" id="MF_00377">
    <property type="entry name" value="DnaA_bact"/>
    <property type="match status" value="1"/>
</dbReference>
<dbReference type="InterPro" id="IPR003593">
    <property type="entry name" value="AAA+_ATPase"/>
</dbReference>
<dbReference type="InterPro" id="IPR001957">
    <property type="entry name" value="Chromosome_initiator_DnaA"/>
</dbReference>
<dbReference type="InterPro" id="IPR020591">
    <property type="entry name" value="Chromosome_initiator_DnaA-like"/>
</dbReference>
<dbReference type="InterPro" id="IPR018312">
    <property type="entry name" value="Chromosome_initiator_DnaA_CS"/>
</dbReference>
<dbReference type="InterPro" id="IPR013159">
    <property type="entry name" value="DnaA_C"/>
</dbReference>
<dbReference type="InterPro" id="IPR013317">
    <property type="entry name" value="DnaA_dom"/>
</dbReference>
<dbReference type="InterPro" id="IPR038454">
    <property type="entry name" value="DnaA_N_sf"/>
</dbReference>
<dbReference type="InterPro" id="IPR027417">
    <property type="entry name" value="P-loop_NTPase"/>
</dbReference>
<dbReference type="InterPro" id="IPR010921">
    <property type="entry name" value="Trp_repressor/repl_initiator"/>
</dbReference>
<dbReference type="NCBIfam" id="TIGR00362">
    <property type="entry name" value="DnaA"/>
    <property type="match status" value="1"/>
</dbReference>
<dbReference type="NCBIfam" id="NF010686">
    <property type="entry name" value="PRK14086.1"/>
    <property type="match status" value="1"/>
</dbReference>
<dbReference type="PANTHER" id="PTHR30050">
    <property type="entry name" value="CHROMOSOMAL REPLICATION INITIATOR PROTEIN DNAA"/>
    <property type="match status" value="1"/>
</dbReference>
<dbReference type="PANTHER" id="PTHR30050:SF2">
    <property type="entry name" value="CHROMOSOMAL REPLICATION INITIATOR PROTEIN DNAA"/>
    <property type="match status" value="1"/>
</dbReference>
<dbReference type="Pfam" id="PF00308">
    <property type="entry name" value="Bac_DnaA"/>
    <property type="match status" value="1"/>
</dbReference>
<dbReference type="Pfam" id="PF08299">
    <property type="entry name" value="Bac_DnaA_C"/>
    <property type="match status" value="1"/>
</dbReference>
<dbReference type="PRINTS" id="PR00051">
    <property type="entry name" value="DNAA"/>
</dbReference>
<dbReference type="SMART" id="SM00382">
    <property type="entry name" value="AAA"/>
    <property type="match status" value="1"/>
</dbReference>
<dbReference type="SMART" id="SM00760">
    <property type="entry name" value="Bac_DnaA_C"/>
    <property type="match status" value="1"/>
</dbReference>
<dbReference type="SUPFAM" id="SSF52540">
    <property type="entry name" value="P-loop containing nucleoside triphosphate hydrolases"/>
    <property type="match status" value="1"/>
</dbReference>
<dbReference type="SUPFAM" id="SSF48295">
    <property type="entry name" value="TrpR-like"/>
    <property type="match status" value="1"/>
</dbReference>
<dbReference type="PROSITE" id="PS01008">
    <property type="entry name" value="DNAA"/>
    <property type="match status" value="1"/>
</dbReference>
<keyword id="KW-0067">ATP-binding</keyword>
<keyword id="KW-0963">Cytoplasm</keyword>
<keyword id="KW-0235">DNA replication</keyword>
<keyword id="KW-0238">DNA-binding</keyword>
<keyword id="KW-0446">Lipid-binding</keyword>
<keyword id="KW-0547">Nucleotide-binding</keyword>
<proteinExistence type="inferred from homology"/>